<reference key="1">
    <citation type="journal article" date="2005" name="Plant Mol. Biol.">
        <title>Expression patterns of purple acid phosphatase genes in Arabidopsis organs and functional analysis of AtPAP23 predominantly transcribed in flower.</title>
        <authorList>
            <person name="Zhu H."/>
            <person name="Qian W."/>
            <person name="Lu X."/>
            <person name="Li D."/>
            <person name="Liu X."/>
            <person name="Liu K."/>
            <person name="Wang D."/>
        </authorList>
    </citation>
    <scope>NUCLEOTIDE SEQUENCE [MRNA]</scope>
    <scope>FUNCTION</scope>
    <scope>DEVELOPMENTAL STAGE</scope>
    <scope>BIOPHYSICOCHEMICAL PROPERTIES</scope>
    <scope>COFACTOR</scope>
    <scope>TISSUE SPECIFICITY</scope>
    <source>
        <strain>cv. Columbia</strain>
    </source>
</reference>
<reference key="2">
    <citation type="journal article" date="1999" name="Nature">
        <title>Sequence and analysis of chromosome 4 of the plant Arabidopsis thaliana.</title>
        <authorList>
            <person name="Mayer K.F.X."/>
            <person name="Schueller C."/>
            <person name="Wambutt R."/>
            <person name="Murphy G."/>
            <person name="Volckaert G."/>
            <person name="Pohl T."/>
            <person name="Duesterhoeft A."/>
            <person name="Stiekema W."/>
            <person name="Entian K.-D."/>
            <person name="Terryn N."/>
            <person name="Harris B."/>
            <person name="Ansorge W."/>
            <person name="Brandt P."/>
            <person name="Grivell L.A."/>
            <person name="Rieger M."/>
            <person name="Weichselgartner M."/>
            <person name="de Simone V."/>
            <person name="Obermaier B."/>
            <person name="Mache R."/>
            <person name="Mueller M."/>
            <person name="Kreis M."/>
            <person name="Delseny M."/>
            <person name="Puigdomenech P."/>
            <person name="Watson M."/>
            <person name="Schmidtheini T."/>
            <person name="Reichert B."/>
            <person name="Portetelle D."/>
            <person name="Perez-Alonso M."/>
            <person name="Boutry M."/>
            <person name="Bancroft I."/>
            <person name="Vos P."/>
            <person name="Hoheisel J."/>
            <person name="Zimmermann W."/>
            <person name="Wedler H."/>
            <person name="Ridley P."/>
            <person name="Langham S.-A."/>
            <person name="McCullagh B."/>
            <person name="Bilham L."/>
            <person name="Robben J."/>
            <person name="van der Schueren J."/>
            <person name="Grymonprez B."/>
            <person name="Chuang Y.-J."/>
            <person name="Vandenbussche F."/>
            <person name="Braeken M."/>
            <person name="Weltjens I."/>
            <person name="Voet M."/>
            <person name="Bastiaens I."/>
            <person name="Aert R."/>
            <person name="Defoor E."/>
            <person name="Weitzenegger T."/>
            <person name="Bothe G."/>
            <person name="Ramsperger U."/>
            <person name="Hilbert H."/>
            <person name="Braun M."/>
            <person name="Holzer E."/>
            <person name="Brandt A."/>
            <person name="Peters S."/>
            <person name="van Staveren M."/>
            <person name="Dirkse W."/>
            <person name="Mooijman P."/>
            <person name="Klein Lankhorst R."/>
            <person name="Rose M."/>
            <person name="Hauf J."/>
            <person name="Koetter P."/>
            <person name="Berneiser S."/>
            <person name="Hempel S."/>
            <person name="Feldpausch M."/>
            <person name="Lamberth S."/>
            <person name="Van den Daele H."/>
            <person name="De Keyser A."/>
            <person name="Buysshaert C."/>
            <person name="Gielen J."/>
            <person name="Villarroel R."/>
            <person name="De Clercq R."/>
            <person name="van Montagu M."/>
            <person name="Rogers J."/>
            <person name="Cronin A."/>
            <person name="Quail M.A."/>
            <person name="Bray-Allen S."/>
            <person name="Clark L."/>
            <person name="Doggett J."/>
            <person name="Hall S."/>
            <person name="Kay M."/>
            <person name="Lennard N."/>
            <person name="McLay K."/>
            <person name="Mayes R."/>
            <person name="Pettett A."/>
            <person name="Rajandream M.A."/>
            <person name="Lyne M."/>
            <person name="Benes V."/>
            <person name="Rechmann S."/>
            <person name="Borkova D."/>
            <person name="Bloecker H."/>
            <person name="Scharfe M."/>
            <person name="Grimm M."/>
            <person name="Loehnert T.-H."/>
            <person name="Dose S."/>
            <person name="de Haan M."/>
            <person name="Maarse A.C."/>
            <person name="Schaefer M."/>
            <person name="Mueller-Auer S."/>
            <person name="Gabel C."/>
            <person name="Fuchs M."/>
            <person name="Fartmann B."/>
            <person name="Granderath K."/>
            <person name="Dauner D."/>
            <person name="Herzl A."/>
            <person name="Neumann S."/>
            <person name="Argiriou A."/>
            <person name="Vitale D."/>
            <person name="Liguori R."/>
            <person name="Piravandi E."/>
            <person name="Massenet O."/>
            <person name="Quigley F."/>
            <person name="Clabauld G."/>
            <person name="Muendlein A."/>
            <person name="Felber R."/>
            <person name="Schnabl S."/>
            <person name="Hiller R."/>
            <person name="Schmidt W."/>
            <person name="Lecharny A."/>
            <person name="Aubourg S."/>
            <person name="Chefdor F."/>
            <person name="Cooke R."/>
            <person name="Berger C."/>
            <person name="Monfort A."/>
            <person name="Casacuberta E."/>
            <person name="Gibbons T."/>
            <person name="Weber N."/>
            <person name="Vandenbol M."/>
            <person name="Bargues M."/>
            <person name="Terol J."/>
            <person name="Torres A."/>
            <person name="Perez-Perez A."/>
            <person name="Purnelle B."/>
            <person name="Bent E."/>
            <person name="Johnson S."/>
            <person name="Tacon D."/>
            <person name="Jesse T."/>
            <person name="Heijnen L."/>
            <person name="Schwarz S."/>
            <person name="Scholler P."/>
            <person name="Heber S."/>
            <person name="Francs P."/>
            <person name="Bielke C."/>
            <person name="Frishman D."/>
            <person name="Haase D."/>
            <person name="Lemcke K."/>
            <person name="Mewes H.-W."/>
            <person name="Stocker S."/>
            <person name="Zaccaria P."/>
            <person name="Bevan M."/>
            <person name="Wilson R.K."/>
            <person name="de la Bastide M."/>
            <person name="Habermann K."/>
            <person name="Parnell L."/>
            <person name="Dedhia N."/>
            <person name="Gnoj L."/>
            <person name="Schutz K."/>
            <person name="Huang E."/>
            <person name="Spiegel L."/>
            <person name="Sekhon M."/>
            <person name="Murray J."/>
            <person name="Sheet P."/>
            <person name="Cordes M."/>
            <person name="Abu-Threideh J."/>
            <person name="Stoneking T."/>
            <person name="Kalicki J."/>
            <person name="Graves T."/>
            <person name="Harmon G."/>
            <person name="Edwards J."/>
            <person name="Latreille P."/>
            <person name="Courtney L."/>
            <person name="Cloud J."/>
            <person name="Abbott A."/>
            <person name="Scott K."/>
            <person name="Johnson D."/>
            <person name="Minx P."/>
            <person name="Bentley D."/>
            <person name="Fulton B."/>
            <person name="Miller N."/>
            <person name="Greco T."/>
            <person name="Kemp K."/>
            <person name="Kramer J."/>
            <person name="Fulton L."/>
            <person name="Mardis E."/>
            <person name="Dante M."/>
            <person name="Pepin K."/>
            <person name="Hillier L.W."/>
            <person name="Nelson J."/>
            <person name="Spieth J."/>
            <person name="Ryan E."/>
            <person name="Andrews S."/>
            <person name="Geisel C."/>
            <person name="Layman D."/>
            <person name="Du H."/>
            <person name="Ali J."/>
            <person name="Berghoff A."/>
            <person name="Jones K."/>
            <person name="Drone K."/>
            <person name="Cotton M."/>
            <person name="Joshu C."/>
            <person name="Antonoiu B."/>
            <person name="Zidanic M."/>
            <person name="Strong C."/>
            <person name="Sun H."/>
            <person name="Lamar B."/>
            <person name="Yordan C."/>
            <person name="Ma P."/>
            <person name="Zhong J."/>
            <person name="Preston R."/>
            <person name="Vil D."/>
            <person name="Shekher M."/>
            <person name="Matero A."/>
            <person name="Shah R."/>
            <person name="Swaby I.K."/>
            <person name="O'Shaughnessy A."/>
            <person name="Rodriguez M."/>
            <person name="Hoffman J."/>
            <person name="Till S."/>
            <person name="Granat S."/>
            <person name="Shohdy N."/>
            <person name="Hasegawa A."/>
            <person name="Hameed A."/>
            <person name="Lodhi M."/>
            <person name="Johnson A."/>
            <person name="Chen E."/>
            <person name="Marra M.A."/>
            <person name="Martienssen R."/>
            <person name="McCombie W.R."/>
        </authorList>
    </citation>
    <scope>NUCLEOTIDE SEQUENCE [LARGE SCALE GENOMIC DNA]</scope>
    <source>
        <strain>cv. Columbia</strain>
    </source>
</reference>
<reference key="3">
    <citation type="journal article" date="2017" name="Plant J.">
        <title>Araport11: a complete reannotation of the Arabidopsis thaliana reference genome.</title>
        <authorList>
            <person name="Cheng C.Y."/>
            <person name="Krishnakumar V."/>
            <person name="Chan A.P."/>
            <person name="Thibaud-Nissen F."/>
            <person name="Schobel S."/>
            <person name="Town C.D."/>
        </authorList>
    </citation>
    <scope>GENOME REANNOTATION</scope>
    <scope>SEQUENCE REVISION</scope>
    <source>
        <strain>cv. Columbia</strain>
    </source>
</reference>
<reference key="4">
    <citation type="journal article" date="2002" name="J. Biol. Chem.">
        <title>Purple acid phosphatases of Arabidopsis thaliana. Comparative analysis and differential regulation by phosphate deprivation.</title>
        <authorList>
            <person name="Li D."/>
            <person name="Zhu H."/>
            <person name="Liu K."/>
            <person name="Liu X."/>
            <person name="Leggewie G."/>
            <person name="Udvardi M."/>
            <person name="Wang D."/>
        </authorList>
    </citation>
    <scope>GENE FAMILY</scope>
    <scope>NOMENCLATURE</scope>
</reference>
<name>PPA23_ARATH</name>
<organism>
    <name type="scientific">Arabidopsis thaliana</name>
    <name type="common">Mouse-ear cress</name>
    <dbReference type="NCBI Taxonomy" id="3702"/>
    <lineage>
        <taxon>Eukaryota</taxon>
        <taxon>Viridiplantae</taxon>
        <taxon>Streptophyta</taxon>
        <taxon>Embryophyta</taxon>
        <taxon>Tracheophyta</taxon>
        <taxon>Spermatophyta</taxon>
        <taxon>Magnoliopsida</taxon>
        <taxon>eudicotyledons</taxon>
        <taxon>Gunneridae</taxon>
        <taxon>Pentapetalae</taxon>
        <taxon>rosids</taxon>
        <taxon>malvids</taxon>
        <taxon>Brassicales</taxon>
        <taxon>Brassicaceae</taxon>
        <taxon>Camelineae</taxon>
        <taxon>Arabidopsis</taxon>
    </lineage>
</organism>
<accession>Q6TPH1</accession>
<accession>Q9SVP2</accession>
<keyword id="KW-0325">Glycoprotein</keyword>
<keyword id="KW-0378">Hydrolase</keyword>
<keyword id="KW-0408">Iron</keyword>
<keyword id="KW-0479">Metal-binding</keyword>
<keyword id="KW-1185">Reference proteome</keyword>
<keyword id="KW-0964">Secreted</keyword>
<keyword id="KW-0732">Signal</keyword>
<keyword id="KW-0862">Zinc</keyword>
<evidence type="ECO:0000250" key="1"/>
<evidence type="ECO:0000255" key="2"/>
<evidence type="ECO:0000269" key="3">
    <source>
    </source>
</evidence>
<evidence type="ECO:0000305" key="4"/>
<comment type="function">
    <text evidence="3">Acid phosphatase activity with ATP, ADP, dATP, pyrophosphate, polyphosphate, phosphoserine and phosphothreonine. Low or no activity with phosphotyrosine, AMP and phytate.</text>
</comment>
<comment type="catalytic activity">
    <reaction>
        <text>a phosphate monoester + H2O = an alcohol + phosphate</text>
        <dbReference type="Rhea" id="RHEA:15017"/>
        <dbReference type="ChEBI" id="CHEBI:15377"/>
        <dbReference type="ChEBI" id="CHEBI:30879"/>
        <dbReference type="ChEBI" id="CHEBI:43474"/>
        <dbReference type="ChEBI" id="CHEBI:67140"/>
        <dbReference type="EC" id="3.1.3.2"/>
    </reaction>
</comment>
<comment type="cofactor">
    <cofactor evidence="3">
        <name>Fe cation</name>
        <dbReference type="ChEBI" id="CHEBI:24875"/>
    </cofactor>
    <text evidence="3">Binds 1 Fe cation per subunit.</text>
</comment>
<comment type="cofactor">
    <cofactor evidence="3">
        <name>Mn(2+)</name>
        <dbReference type="ChEBI" id="CHEBI:29035"/>
    </cofactor>
    <text evidence="3">Binds 1 Mn(2+) ion per subunit.</text>
</comment>
<comment type="biophysicochemical properties">
    <phDependence>
        <text evidence="3">Optimum pH is 5-6.</text>
    </phDependence>
</comment>
<comment type="subunit">
    <text evidence="1">Homodimer.</text>
</comment>
<comment type="subcellular location">
    <subcellularLocation>
        <location evidence="1">Secreted</location>
    </subcellularLocation>
</comment>
<comment type="tissue specificity">
    <text evidence="3">Specifically expressed in flowers.</text>
</comment>
<comment type="developmental stage">
    <text evidence="3">First observed in the floral apical meristem (FAP). In flowers, observed in petals and anthers, particularly in anther filaments.</text>
</comment>
<comment type="similarity">
    <text evidence="4">Belongs to the metallophosphoesterase superfamily. Purple acid phosphatase family.</text>
</comment>
<comment type="sequence caution" evidence="4">
    <conflict type="erroneous gene model prediction">
        <sequence resource="EMBL-CDS" id="CAB36834"/>
    </conflict>
</comment>
<comment type="sequence caution" evidence="4">
    <conflict type="erroneous gene model prediction">
        <sequence resource="EMBL-CDS" id="CAB78412"/>
    </conflict>
</comment>
<proteinExistence type="evidence at protein level"/>
<feature type="signal peptide" evidence="2">
    <location>
        <begin position="1"/>
        <end position="19"/>
    </location>
</feature>
<feature type="chain" id="PRO_0000372826" description="Purple acid phosphatase 23">
    <location>
        <begin position="20"/>
        <end position="458"/>
    </location>
</feature>
<feature type="active site" description="Proton donor" evidence="1">
    <location>
        <position position="370"/>
    </location>
</feature>
<feature type="binding site" evidence="4">
    <location>
        <position position="194"/>
    </location>
    <ligand>
        <name>Fe cation</name>
        <dbReference type="ChEBI" id="CHEBI:24875"/>
    </ligand>
</feature>
<feature type="binding site" evidence="4">
    <location>
        <position position="221"/>
    </location>
    <ligand>
        <name>Fe cation</name>
        <dbReference type="ChEBI" id="CHEBI:24875"/>
    </ligand>
</feature>
<feature type="binding site" evidence="4">
    <location>
        <position position="221"/>
    </location>
    <ligand>
        <name>Mn(2+)</name>
        <dbReference type="ChEBI" id="CHEBI:29035"/>
    </ligand>
</feature>
<feature type="binding site" evidence="4">
    <location>
        <position position="224"/>
    </location>
    <ligand>
        <name>Fe cation</name>
        <dbReference type="ChEBI" id="CHEBI:24875"/>
    </ligand>
</feature>
<feature type="binding site" evidence="4">
    <location>
        <position position="278"/>
    </location>
    <ligand>
        <name>Mn(2+)</name>
        <dbReference type="ChEBI" id="CHEBI:29035"/>
    </ligand>
</feature>
<feature type="binding site" evidence="1">
    <location>
        <position position="278"/>
    </location>
    <ligand>
        <name>substrate</name>
    </ligand>
</feature>
<feature type="binding site" evidence="4">
    <location>
        <position position="360"/>
    </location>
    <ligand>
        <name>Mn(2+)</name>
        <dbReference type="ChEBI" id="CHEBI:29035"/>
    </ligand>
</feature>
<feature type="binding site" evidence="1">
    <location>
        <begin position="397"/>
        <end position="399"/>
    </location>
    <ligand>
        <name>substrate</name>
    </ligand>
</feature>
<feature type="binding site" evidence="4">
    <location>
        <position position="397"/>
    </location>
    <ligand>
        <name>Mn(2+)</name>
        <dbReference type="ChEBI" id="CHEBI:29035"/>
    </ligand>
</feature>
<feature type="binding site" evidence="4">
    <location>
        <position position="399"/>
    </location>
    <ligand>
        <name>Fe cation</name>
        <dbReference type="ChEBI" id="CHEBI:24875"/>
    </ligand>
</feature>
<feature type="glycosylation site" description="N-linked (GlcNAc...) asparagine" evidence="2">
    <location>
        <position position="59"/>
    </location>
</feature>
<feature type="glycosylation site" description="N-linked (GlcNAc...) asparagine" evidence="2">
    <location>
        <position position="121"/>
    </location>
</feature>
<feature type="glycosylation site" description="N-linked (GlcNAc...) asparagine" evidence="2">
    <location>
        <position position="136"/>
    </location>
</feature>
<feature type="glycosylation site" description="N-linked (GlcNAc...) asparagine" evidence="2">
    <location>
        <position position="200"/>
    </location>
</feature>
<feature type="glycosylation site" description="N-linked (GlcNAc...) asparagine" evidence="2">
    <location>
        <position position="331"/>
    </location>
</feature>
<feature type="glycosylation site" description="N-linked (GlcNAc...) asparagine" evidence="2">
    <location>
        <position position="409"/>
    </location>
</feature>
<feature type="glycosylation site" description="N-linked (GlcNAc...) asparagine" evidence="2">
    <location>
        <position position="455"/>
    </location>
</feature>
<feature type="sequence conflict" description="In Ref. 1; AAQ93685 and 3; AEE83314." evidence="4" ref="1 3">
    <original>L</original>
    <variation>F</variation>
    <location>
        <position position="310"/>
    </location>
</feature>
<sequence>MTLLIMITLTSISLLLAAAETIPTTLDGPFKPLTRRFEPSLRRGSDDLPMDHPRLRKRNVSSDFPEQIALALSTPTSMWVSWVTGDAIVGKDVKPLDPSSIASEVWYGKEKGNYMLKKKGNATVYSQLYPSDGLLNYTSGIIHHVLIDGLEPETRYYYRCGDSSVPAMSEEISFETLPLPSKDAYPHRIAFVGDLGLTSNTTTTIDHLMENDPSLVIIVGDLTYANQYRTIGGKGVPCFSCSFPDAPIRETYQPRWDAWGRFMEPLTSKVPTMVIEGNHEIEPQASGITFKSYSERFAVPASESGSNSNLYYSFDAGGVHFVMLGAYVDYNNTGLQYAWLKEDLSKVDRAVTPWLVATMHPPWYNSYSSHYQEFECMRQEMEELLYQYRVDIVFAGHVHAYERMNRIYNYTLDPCGPVYITIGDGGNIEKVDVDFADDPGKCHSSYDLFFFNSLNLSN</sequence>
<dbReference type="EC" id="3.1.3.2"/>
<dbReference type="EMBL" id="AY390530">
    <property type="protein sequence ID" value="AAQ93685.1"/>
    <property type="molecule type" value="mRNA"/>
</dbReference>
<dbReference type="EMBL" id="AL035528">
    <property type="protein sequence ID" value="CAB36834.1"/>
    <property type="status" value="ALT_SEQ"/>
    <property type="molecule type" value="Genomic_DNA"/>
</dbReference>
<dbReference type="EMBL" id="AL161537">
    <property type="protein sequence ID" value="CAB78412.1"/>
    <property type="status" value="ALT_SEQ"/>
    <property type="molecule type" value="Genomic_DNA"/>
</dbReference>
<dbReference type="EMBL" id="CP002687">
    <property type="protein sequence ID" value="AEE83314.1"/>
    <property type="molecule type" value="Genomic_DNA"/>
</dbReference>
<dbReference type="PIR" id="T05239">
    <property type="entry name" value="T05239"/>
</dbReference>
<dbReference type="RefSeq" id="NP_193106.3">
    <property type="nucleotide sequence ID" value="NM_117444.3"/>
</dbReference>
<dbReference type="SMR" id="Q6TPH1"/>
<dbReference type="FunCoup" id="Q6TPH1">
    <property type="interactions" value="104"/>
</dbReference>
<dbReference type="STRING" id="3702.Q6TPH1"/>
<dbReference type="GlyCosmos" id="Q6TPH1">
    <property type="glycosylation" value="7 sites, No reported glycans"/>
</dbReference>
<dbReference type="GlyGen" id="Q6TPH1">
    <property type="glycosylation" value="8 sites"/>
</dbReference>
<dbReference type="PaxDb" id="3702-AT4G13700.1"/>
<dbReference type="PeptideAtlas" id="Q6TPH1"/>
<dbReference type="GeneID" id="827004"/>
<dbReference type="KEGG" id="ath:AT4G13700"/>
<dbReference type="Araport" id="AT4G13700"/>
<dbReference type="TAIR" id="AT4G13700">
    <property type="gene designation" value="PAP23"/>
</dbReference>
<dbReference type="eggNOG" id="KOG1378">
    <property type="taxonomic scope" value="Eukaryota"/>
</dbReference>
<dbReference type="HOGENOM" id="CLU_013387_0_0_1"/>
<dbReference type="InParanoid" id="Q6TPH1"/>
<dbReference type="PhylomeDB" id="Q6TPH1"/>
<dbReference type="BioCyc" id="ARA:AT4G13700-MONOMER"/>
<dbReference type="BRENDA" id="3.1.3.2">
    <property type="organism ID" value="399"/>
</dbReference>
<dbReference type="PRO" id="PR:Q6TPH1"/>
<dbReference type="Proteomes" id="UP000006548">
    <property type="component" value="Chromosome 4"/>
</dbReference>
<dbReference type="ExpressionAtlas" id="Q6TPH1">
    <property type="expression patterns" value="baseline and differential"/>
</dbReference>
<dbReference type="GO" id="GO:0005576">
    <property type="term" value="C:extracellular region"/>
    <property type="evidence" value="ECO:0007669"/>
    <property type="project" value="UniProtKB-SubCell"/>
</dbReference>
<dbReference type="GO" id="GO:0003993">
    <property type="term" value="F:acid phosphatase activity"/>
    <property type="evidence" value="ECO:0007669"/>
    <property type="project" value="UniProtKB-EC"/>
</dbReference>
<dbReference type="GO" id="GO:0046872">
    <property type="term" value="F:metal ion binding"/>
    <property type="evidence" value="ECO:0007669"/>
    <property type="project" value="UniProtKB-KW"/>
</dbReference>
<dbReference type="CDD" id="cd00839">
    <property type="entry name" value="MPP_PAPs"/>
    <property type="match status" value="1"/>
</dbReference>
<dbReference type="Gene3D" id="3.60.21.10">
    <property type="match status" value="1"/>
</dbReference>
<dbReference type="Gene3D" id="2.60.40.380">
    <property type="entry name" value="Purple acid phosphatase-like, N-terminal"/>
    <property type="match status" value="1"/>
</dbReference>
<dbReference type="InterPro" id="IPR004843">
    <property type="entry name" value="Calcineurin-like_PHP_ApaH"/>
</dbReference>
<dbReference type="InterPro" id="IPR029052">
    <property type="entry name" value="Metallo-depent_PP-like"/>
</dbReference>
<dbReference type="InterPro" id="IPR041792">
    <property type="entry name" value="MPP_PAP"/>
</dbReference>
<dbReference type="InterPro" id="IPR039331">
    <property type="entry name" value="PPA-like"/>
</dbReference>
<dbReference type="InterPro" id="IPR008963">
    <property type="entry name" value="Purple_acid_Pase-like_N"/>
</dbReference>
<dbReference type="InterPro" id="IPR015914">
    <property type="entry name" value="Purple_acid_Pase_N"/>
</dbReference>
<dbReference type="PANTHER" id="PTHR22953">
    <property type="entry name" value="ACID PHOSPHATASE RELATED"/>
    <property type="match status" value="1"/>
</dbReference>
<dbReference type="PANTHER" id="PTHR22953:SF153">
    <property type="entry name" value="PURPLE ACID PHOSPHATASE"/>
    <property type="match status" value="1"/>
</dbReference>
<dbReference type="Pfam" id="PF00149">
    <property type="entry name" value="Metallophos"/>
    <property type="match status" value="1"/>
</dbReference>
<dbReference type="Pfam" id="PF16656">
    <property type="entry name" value="Pur_ac_phosph_N"/>
    <property type="match status" value="1"/>
</dbReference>
<dbReference type="SUPFAM" id="SSF56300">
    <property type="entry name" value="Metallo-dependent phosphatases"/>
    <property type="match status" value="1"/>
</dbReference>
<dbReference type="SUPFAM" id="SSF49363">
    <property type="entry name" value="Purple acid phosphatase, N-terminal domain"/>
    <property type="match status" value="1"/>
</dbReference>
<protein>
    <recommendedName>
        <fullName>Purple acid phosphatase 23</fullName>
        <ecNumber>3.1.3.2</ecNumber>
    </recommendedName>
</protein>
<gene>
    <name type="primary">PAP23</name>
    <name type="synonym">AT3</name>
    <name type="ordered locus">At4g13700</name>
    <name type="ORF">F18A5.90</name>
</gene>